<keyword id="KW-0963">Cytoplasm</keyword>
<keyword id="KW-0255">Endonuclease</keyword>
<keyword id="KW-0378">Hydrolase</keyword>
<keyword id="KW-0460">Magnesium</keyword>
<keyword id="KW-0479">Metal-binding</keyword>
<keyword id="KW-0540">Nuclease</keyword>
<accession>Q6G0C8</accession>
<comment type="function">
    <text evidence="1">Endonuclease that specifically degrades the RNA of RNA-DNA hybrids.</text>
</comment>
<comment type="catalytic activity">
    <reaction evidence="1">
        <text>Endonucleolytic cleavage to 5'-phosphomonoester.</text>
        <dbReference type="EC" id="3.1.26.4"/>
    </reaction>
</comment>
<comment type="cofactor">
    <cofactor evidence="1">
        <name>Mg(2+)</name>
        <dbReference type="ChEBI" id="CHEBI:18420"/>
    </cofactor>
    <text evidence="1">Binds 1 Mg(2+) ion per subunit. May bind a second metal ion at a regulatory site, or after substrate binding.</text>
</comment>
<comment type="subunit">
    <text evidence="1">Monomer.</text>
</comment>
<comment type="subcellular location">
    <subcellularLocation>
        <location evidence="1">Cytoplasm</location>
    </subcellularLocation>
</comment>
<comment type="similarity">
    <text evidence="1">Belongs to the RNase H family.</text>
</comment>
<feature type="chain" id="PRO_0000332562" description="Ribonuclease H">
    <location>
        <begin position="1"/>
        <end position="155"/>
    </location>
</feature>
<feature type="domain" description="RNase H type-1" evidence="2">
    <location>
        <begin position="4"/>
        <end position="145"/>
    </location>
</feature>
<feature type="binding site" evidence="1">
    <location>
        <position position="13"/>
    </location>
    <ligand>
        <name>Mg(2+)</name>
        <dbReference type="ChEBI" id="CHEBI:18420"/>
        <label>1</label>
    </ligand>
</feature>
<feature type="binding site" evidence="1">
    <location>
        <position position="13"/>
    </location>
    <ligand>
        <name>Mg(2+)</name>
        <dbReference type="ChEBI" id="CHEBI:18420"/>
        <label>2</label>
    </ligand>
</feature>
<feature type="binding site" evidence="1">
    <location>
        <position position="51"/>
    </location>
    <ligand>
        <name>Mg(2+)</name>
        <dbReference type="ChEBI" id="CHEBI:18420"/>
        <label>1</label>
    </ligand>
</feature>
<feature type="binding site" evidence="1">
    <location>
        <position position="73"/>
    </location>
    <ligand>
        <name>Mg(2+)</name>
        <dbReference type="ChEBI" id="CHEBI:18420"/>
        <label>1</label>
    </ligand>
</feature>
<feature type="binding site" evidence="1">
    <location>
        <position position="137"/>
    </location>
    <ligand>
        <name>Mg(2+)</name>
        <dbReference type="ChEBI" id="CHEBI:18420"/>
        <label>2</label>
    </ligand>
</feature>
<gene>
    <name evidence="1" type="primary">rnhA</name>
    <name type="ordered locus">BQ03620</name>
</gene>
<organism>
    <name type="scientific">Bartonella quintana (strain Toulouse)</name>
    <name type="common">Rochalimaea quintana</name>
    <dbReference type="NCBI Taxonomy" id="283165"/>
    <lineage>
        <taxon>Bacteria</taxon>
        <taxon>Pseudomonadati</taxon>
        <taxon>Pseudomonadota</taxon>
        <taxon>Alphaproteobacteria</taxon>
        <taxon>Hyphomicrobiales</taxon>
        <taxon>Bartonellaceae</taxon>
        <taxon>Bartonella</taxon>
    </lineage>
</organism>
<reference key="1">
    <citation type="journal article" date="2004" name="Proc. Natl. Acad. Sci. U.S.A.">
        <title>The louse-borne human pathogen Bartonella quintana is a genomic derivative of the zoonotic agent Bartonella henselae.</title>
        <authorList>
            <person name="Alsmark U.C.M."/>
            <person name="Frank A.C."/>
            <person name="Karlberg E.O."/>
            <person name="Legault B.-A."/>
            <person name="Ardell D.H."/>
            <person name="Canbaeck B."/>
            <person name="Eriksson A.-S."/>
            <person name="Naeslund A.K."/>
            <person name="Handley S.A."/>
            <person name="Huvet M."/>
            <person name="La Scola B."/>
            <person name="Holmberg M."/>
            <person name="Andersson S.G.E."/>
        </authorList>
    </citation>
    <scope>NUCLEOTIDE SEQUENCE [LARGE SCALE GENOMIC DNA]</scope>
    <source>
        <strain>Toulouse</strain>
    </source>
</reference>
<protein>
    <recommendedName>
        <fullName evidence="1">Ribonuclease H</fullName>
        <shortName evidence="1">RNase H</shortName>
        <ecNumber evidence="1">3.1.26.4</ecNumber>
    </recommendedName>
</protein>
<sequence length="155" mass="17742">MLNQQKVVEIYTDGACSGNPGVGGWGAILRWNGHERELYSGEVQTTNNRMELMAAICALKVLKEACSVDLYTDSVYVRNGISLWLERWKMNNWRTTSKKTVKNIELWKALEDVCSLHTIRWHWVKGHAGHPDNERADALARKAITEYRKNGYFSA</sequence>
<proteinExistence type="inferred from homology"/>
<name>RNH_BARQU</name>
<evidence type="ECO:0000255" key="1">
    <source>
        <dbReference type="HAMAP-Rule" id="MF_00042"/>
    </source>
</evidence>
<evidence type="ECO:0000255" key="2">
    <source>
        <dbReference type="PROSITE-ProRule" id="PRU00408"/>
    </source>
</evidence>
<dbReference type="EC" id="3.1.26.4" evidence="1"/>
<dbReference type="EMBL" id="BX897700">
    <property type="protein sequence ID" value="CAF25862.1"/>
    <property type="molecule type" value="Genomic_DNA"/>
</dbReference>
<dbReference type="RefSeq" id="WP_011179154.1">
    <property type="nucleotide sequence ID" value="NC_005955.1"/>
</dbReference>
<dbReference type="SMR" id="Q6G0C8"/>
<dbReference type="GeneID" id="56533269"/>
<dbReference type="KEGG" id="bqu:BQ03620"/>
<dbReference type="eggNOG" id="COG0328">
    <property type="taxonomic scope" value="Bacteria"/>
</dbReference>
<dbReference type="HOGENOM" id="CLU_030894_6_0_5"/>
<dbReference type="OrthoDB" id="7845843at2"/>
<dbReference type="Proteomes" id="UP000000597">
    <property type="component" value="Chromosome"/>
</dbReference>
<dbReference type="GO" id="GO:0005737">
    <property type="term" value="C:cytoplasm"/>
    <property type="evidence" value="ECO:0007669"/>
    <property type="project" value="UniProtKB-SubCell"/>
</dbReference>
<dbReference type="GO" id="GO:0000287">
    <property type="term" value="F:magnesium ion binding"/>
    <property type="evidence" value="ECO:0007669"/>
    <property type="project" value="UniProtKB-UniRule"/>
</dbReference>
<dbReference type="GO" id="GO:0003676">
    <property type="term" value="F:nucleic acid binding"/>
    <property type="evidence" value="ECO:0007669"/>
    <property type="project" value="InterPro"/>
</dbReference>
<dbReference type="GO" id="GO:0004523">
    <property type="term" value="F:RNA-DNA hybrid ribonuclease activity"/>
    <property type="evidence" value="ECO:0007669"/>
    <property type="project" value="UniProtKB-UniRule"/>
</dbReference>
<dbReference type="GO" id="GO:0043137">
    <property type="term" value="P:DNA replication, removal of RNA primer"/>
    <property type="evidence" value="ECO:0007669"/>
    <property type="project" value="TreeGrafter"/>
</dbReference>
<dbReference type="CDD" id="cd09278">
    <property type="entry name" value="RNase_HI_prokaryote_like"/>
    <property type="match status" value="1"/>
</dbReference>
<dbReference type="FunFam" id="3.30.420.10:FF:000089">
    <property type="entry name" value="Ribonuclease H"/>
    <property type="match status" value="1"/>
</dbReference>
<dbReference type="Gene3D" id="3.30.420.10">
    <property type="entry name" value="Ribonuclease H-like superfamily/Ribonuclease H"/>
    <property type="match status" value="1"/>
</dbReference>
<dbReference type="HAMAP" id="MF_00042">
    <property type="entry name" value="RNase_H"/>
    <property type="match status" value="1"/>
</dbReference>
<dbReference type="InterPro" id="IPR050092">
    <property type="entry name" value="RNase_H"/>
</dbReference>
<dbReference type="InterPro" id="IPR012337">
    <property type="entry name" value="RNaseH-like_sf"/>
</dbReference>
<dbReference type="InterPro" id="IPR002156">
    <property type="entry name" value="RNaseH_domain"/>
</dbReference>
<dbReference type="InterPro" id="IPR036397">
    <property type="entry name" value="RNaseH_sf"/>
</dbReference>
<dbReference type="InterPro" id="IPR022892">
    <property type="entry name" value="RNaseHI"/>
</dbReference>
<dbReference type="NCBIfam" id="NF001236">
    <property type="entry name" value="PRK00203.1"/>
    <property type="match status" value="1"/>
</dbReference>
<dbReference type="PANTHER" id="PTHR10642">
    <property type="entry name" value="RIBONUCLEASE H1"/>
    <property type="match status" value="1"/>
</dbReference>
<dbReference type="PANTHER" id="PTHR10642:SF26">
    <property type="entry name" value="RIBONUCLEASE H1"/>
    <property type="match status" value="1"/>
</dbReference>
<dbReference type="Pfam" id="PF00075">
    <property type="entry name" value="RNase_H"/>
    <property type="match status" value="1"/>
</dbReference>
<dbReference type="SUPFAM" id="SSF53098">
    <property type="entry name" value="Ribonuclease H-like"/>
    <property type="match status" value="1"/>
</dbReference>
<dbReference type="PROSITE" id="PS50879">
    <property type="entry name" value="RNASE_H_1"/>
    <property type="match status" value="1"/>
</dbReference>